<protein>
    <recommendedName>
        <fullName evidence="11">Peroxisomal biogenesis factor 2</fullName>
        <ecNumber evidence="7">2.3.2.36</ecNumber>
    </recommendedName>
    <alternativeName>
        <fullName evidence="11">Peroxin-2</fullName>
    </alternativeName>
</protein>
<keyword id="KW-0024">Alternative initiation</keyword>
<keyword id="KW-0472">Membrane</keyword>
<keyword id="KW-0479">Metal-binding</keyword>
<keyword id="KW-0576">Peroxisome</keyword>
<keyword id="KW-0653">Protein transport</keyword>
<keyword id="KW-1185">Reference proteome</keyword>
<keyword id="KW-0808">Transferase</keyword>
<keyword id="KW-0812">Transmembrane</keyword>
<keyword id="KW-1133">Transmembrane helix</keyword>
<keyword id="KW-0813">Transport</keyword>
<keyword id="KW-0833">Ubl conjugation pathway</keyword>
<keyword id="KW-0862">Zinc</keyword>
<keyword id="KW-0863">Zinc-finger</keyword>
<feature type="chain" id="PRO_0000030724" description="Peroxisomal biogenesis factor 2">
    <location>
        <begin position="1"/>
        <end position="271"/>
    </location>
</feature>
<feature type="topological domain" description="Peroxisomal matrix" evidence="1">
    <location>
        <begin position="1"/>
        <end position="2"/>
    </location>
</feature>
<feature type="transmembrane region" description="Helical; Name=TM1" evidence="1">
    <location>
        <begin position="3"/>
        <end position="29"/>
    </location>
</feature>
<feature type="topological domain" description="Cytoplasmic" evidence="1">
    <location>
        <begin position="30"/>
        <end position="33"/>
    </location>
</feature>
<feature type="transmembrane region" description="Helical; Name=TM2" evidence="1">
    <location>
        <begin position="34"/>
        <end position="60"/>
    </location>
</feature>
<feature type="topological domain" description="Peroxisomal matrix" evidence="1">
    <location>
        <begin position="61"/>
        <end position="77"/>
    </location>
</feature>
<feature type="transmembrane region" description="Helical; Name=TM3" evidence="1">
    <location>
        <begin position="78"/>
        <end position="97"/>
    </location>
</feature>
<feature type="topological domain" description="Cytoplasmic" evidence="1">
    <location>
        <begin position="98"/>
        <end position="101"/>
    </location>
</feature>
<feature type="transmembrane region" description="Helical; Name=TM4" evidence="1">
    <location>
        <begin position="102"/>
        <end position="133"/>
    </location>
</feature>
<feature type="topological domain" description="Peroxisomal matrix" evidence="1">
    <location>
        <begin position="134"/>
        <end position="175"/>
    </location>
</feature>
<feature type="transmembrane region" description="Helical; Name=TM5" evidence="1">
    <location>
        <begin position="176"/>
        <end position="197"/>
    </location>
</feature>
<feature type="topological domain" description="Cytoplasmic" evidence="1">
    <location>
        <begin position="198"/>
        <end position="271"/>
    </location>
</feature>
<feature type="zinc finger region" description="RING-type">
    <location>
        <begin position="222"/>
        <end position="259"/>
    </location>
</feature>
<feature type="binding site" evidence="1">
    <location>
        <position position="222"/>
    </location>
    <ligand>
        <name>Zn(2+)</name>
        <dbReference type="ChEBI" id="CHEBI:29105"/>
        <label>1</label>
    </ligand>
</feature>
<feature type="binding site" evidence="1">
    <location>
        <position position="225"/>
    </location>
    <ligand>
        <name>Zn(2+)</name>
        <dbReference type="ChEBI" id="CHEBI:29105"/>
        <label>1</label>
    </ligand>
</feature>
<feature type="binding site" evidence="1">
    <location>
        <position position="237"/>
    </location>
    <ligand>
        <name>Zn(2+)</name>
        <dbReference type="ChEBI" id="CHEBI:29105"/>
        <label>2</label>
    </ligand>
</feature>
<feature type="binding site" evidence="1">
    <location>
        <position position="238"/>
    </location>
    <ligand>
        <name>Zn(2+)</name>
        <dbReference type="ChEBI" id="CHEBI:29105"/>
        <label>2</label>
    </ligand>
</feature>
<feature type="binding site" evidence="1">
    <location>
        <position position="243"/>
    </location>
    <ligand>
        <name>Zn(2+)</name>
        <dbReference type="ChEBI" id="CHEBI:29105"/>
        <label>1</label>
    </ligand>
</feature>
<feature type="binding site" evidence="1">
    <location>
        <position position="246"/>
    </location>
    <ligand>
        <name>Zn(2+)</name>
        <dbReference type="ChEBI" id="CHEBI:29105"/>
        <label>1</label>
    </ligand>
</feature>
<feature type="binding site" evidence="1">
    <location>
        <position position="256"/>
    </location>
    <ligand>
        <name>Zn(2+)</name>
        <dbReference type="ChEBI" id="CHEBI:29105"/>
        <label>2</label>
    </ligand>
</feature>
<feature type="binding site" evidence="1">
    <location>
        <position position="259"/>
    </location>
    <ligand>
        <name>Zn(2+)</name>
        <dbReference type="ChEBI" id="CHEBI:29105"/>
        <label>2</label>
    </ligand>
</feature>
<feature type="splice variant" id="VSP_018874" description="In isoform Short." evidence="12">
    <location>
        <begin position="1"/>
        <end position="46"/>
    </location>
</feature>
<feature type="mutagenesis site" description="Does not affect assembly of the PEX2-PEX10-PEX12 complex; causes peroxisomal import defects when associated with mutations in PEX10." evidence="7">
    <original>PR</original>
    <variation>AA</variation>
    <location>
        <begin position="223"/>
        <end position="224"/>
    </location>
</feature>
<feature type="mutagenesis site" description="Abolished protein import in peroxisomes." evidence="7">
    <original>C</original>
    <variation>S</variation>
    <location>
        <position position="237"/>
    </location>
</feature>
<feature type="mutagenesis site" description="Does not affect assembly of the PEX2-PEX10-PEX12 complex." evidence="7">
    <original>D</original>
    <variation>A</variation>
    <location>
        <position position="257"/>
    </location>
</feature>
<proteinExistence type="evidence at protein level"/>
<gene>
    <name evidence="8 13" type="primary">PEX2</name>
    <name evidence="9" type="synonym">CRT1</name>
    <name evidence="10" type="synonym">PAS5</name>
    <name type="ordered locus">YJL210W</name>
    <name type="ORF">HRA271</name>
    <name type="ORF">J0240</name>
</gene>
<reference key="1">
    <citation type="journal article" date="1996" name="Yeast">
        <title>Independent regulation of full-length and 5'-truncated PAS5 mRNAs in Saccharomyces cerevisiae.</title>
        <authorList>
            <person name="Liu Y."/>
            <person name="Gu K.L."/>
            <person name="Dieckmann C.L."/>
        </authorList>
    </citation>
    <scope>NUCLEOTIDE SEQUENCE [GENOMIC DNA]</scope>
    <scope>ALTERNATIVE SPLICING (ISOFORMS LONG AND SHORT)</scope>
</reference>
<reference key="2">
    <citation type="journal article" date="1994" name="Yeast">
        <title>Sequence analysis of a 40.2 kb DNA fragment located near the left telomere of yeast chromosome X.</title>
        <authorList>
            <person name="Vandenbol M."/>
            <person name="Durand P."/>
            <person name="Bolle P.-A."/>
            <person name="Dion C."/>
            <person name="Portetelle D."/>
            <person name="Hilger F."/>
        </authorList>
    </citation>
    <scope>NUCLEOTIDE SEQUENCE [GENOMIC DNA]</scope>
    <source>
        <strain>ATCC 204508 / S288c</strain>
    </source>
</reference>
<reference key="3">
    <citation type="journal article" date="1996" name="EMBO J.">
        <title>Complete nucleotide sequence of Saccharomyces cerevisiae chromosome X.</title>
        <authorList>
            <person name="Galibert F."/>
            <person name="Alexandraki D."/>
            <person name="Baur A."/>
            <person name="Boles E."/>
            <person name="Chalwatzis N."/>
            <person name="Chuat J.-C."/>
            <person name="Coster F."/>
            <person name="Cziepluch C."/>
            <person name="de Haan M."/>
            <person name="Domdey H."/>
            <person name="Durand P."/>
            <person name="Entian K.-D."/>
            <person name="Gatius M."/>
            <person name="Goffeau A."/>
            <person name="Grivell L.A."/>
            <person name="Hennemann A."/>
            <person name="Herbert C.J."/>
            <person name="Heumann K."/>
            <person name="Hilger F."/>
            <person name="Hollenberg C.P."/>
            <person name="Huang M.-E."/>
            <person name="Jacq C."/>
            <person name="Jauniaux J.-C."/>
            <person name="Katsoulou C."/>
            <person name="Kirchrath L."/>
            <person name="Kleine K."/>
            <person name="Kordes E."/>
            <person name="Koetter P."/>
            <person name="Liebl S."/>
            <person name="Louis E.J."/>
            <person name="Manus V."/>
            <person name="Mewes H.-W."/>
            <person name="Miosga T."/>
            <person name="Obermaier B."/>
            <person name="Perea J."/>
            <person name="Pohl T.M."/>
            <person name="Portetelle D."/>
            <person name="Pujol A."/>
            <person name="Purnelle B."/>
            <person name="Ramezani Rad M."/>
            <person name="Rasmussen S.W."/>
            <person name="Rose M."/>
            <person name="Rossau R."/>
            <person name="Schaaff-Gerstenschlaeger I."/>
            <person name="Smits P.H.M."/>
            <person name="Scarcez T."/>
            <person name="Soriano N."/>
            <person name="To Van D."/>
            <person name="Tzermia M."/>
            <person name="Van Broekhoven A."/>
            <person name="Vandenbol M."/>
            <person name="Wedler H."/>
            <person name="von Wettstein D."/>
            <person name="Wambutt R."/>
            <person name="Zagulski M."/>
            <person name="Zollner A."/>
            <person name="Karpfinger-Hartl L."/>
        </authorList>
    </citation>
    <scope>NUCLEOTIDE SEQUENCE [LARGE SCALE GENOMIC DNA]</scope>
    <source>
        <strain>ATCC 204508 / S288c</strain>
    </source>
</reference>
<reference key="4">
    <citation type="journal article" date="2014" name="G3 (Bethesda)">
        <title>The reference genome sequence of Saccharomyces cerevisiae: Then and now.</title>
        <authorList>
            <person name="Engel S.R."/>
            <person name="Dietrich F.S."/>
            <person name="Fisk D.G."/>
            <person name="Binkley G."/>
            <person name="Balakrishnan R."/>
            <person name="Costanzo M.C."/>
            <person name="Dwight S.S."/>
            <person name="Hitz B.C."/>
            <person name="Karra K."/>
            <person name="Nash R.S."/>
            <person name="Weng S."/>
            <person name="Wong E.D."/>
            <person name="Lloyd P."/>
            <person name="Skrzypek M.S."/>
            <person name="Miyasato S.R."/>
            <person name="Simison M."/>
            <person name="Cherry J.M."/>
        </authorList>
    </citation>
    <scope>GENOME REANNOTATION</scope>
    <source>
        <strain>ATCC 204508 / S288c</strain>
    </source>
</reference>
<reference key="5">
    <citation type="journal article" date="2003" name="J. Cell Sci.">
        <title>Pex10p links the ubiquitin conjugating enzyme Pex4p to the protein import machinery of the peroxisome.</title>
        <authorList>
            <person name="Eckert J.H."/>
            <person name="Johnsson N."/>
        </authorList>
    </citation>
    <scope>SUBCELLULAR LOCATION</scope>
</reference>
<reference key="6">
    <citation type="journal article" date="2003" name="Nature">
        <title>Global analysis of protein expression in yeast.</title>
        <authorList>
            <person name="Ghaemmaghami S."/>
            <person name="Huh W.-K."/>
            <person name="Bower K."/>
            <person name="Howson R.W."/>
            <person name="Belle A."/>
            <person name="Dephoure N."/>
            <person name="O'Shea E.K."/>
            <person name="Weissman J.S."/>
        </authorList>
    </citation>
    <scope>LEVEL OF PROTEIN EXPRESSION [LARGE SCALE ANALYSIS]</scope>
</reference>
<reference key="7">
    <citation type="journal article" date="2009" name="Mol. Cell. Biol.">
        <title>Pex2 and pex12 function as protein-ubiquitin ligases in peroxisomal protein import.</title>
        <authorList>
            <person name="Platta H.W."/>
            <person name="El Magraoui F."/>
            <person name="Baeumer B.E."/>
            <person name="Schlee D."/>
            <person name="Girzalsky W."/>
            <person name="Erdmann R."/>
        </authorList>
    </citation>
    <scope>FUNCTION</scope>
    <scope>PATHWAY</scope>
</reference>
<reference key="8">
    <citation type="journal article" date="2012" name="FEBS J.">
        <title>The RING-type ubiquitin ligases Pex2p, Pex10p and Pex12p form a heteromeric complex that displays enhanced activity in an ubiquitin conjugating enzyme-selective manner.</title>
        <authorList>
            <person name="El Magraoui F."/>
            <person name="Baeumer B.E."/>
            <person name="Platta H.W."/>
            <person name="Baumann J.S."/>
            <person name="Girzalsky W."/>
            <person name="Erdmann R."/>
        </authorList>
    </citation>
    <scope>FUNCTION</scope>
    <scope>PATHWAY</scope>
    <scope>IDENTIFICATION IN THE PEX2-PEX10-PEX12 RETROTRANSLOCATION CHANNEL</scope>
</reference>
<reference key="9">
    <citation type="journal article" date="2022" name="Nature">
        <title>A peroxisomal ubiquitin ligase complex forms a retrotranslocation channel.</title>
        <authorList>
            <person name="Feng P."/>
            <person name="Wu X."/>
            <person name="Erramilli S.K."/>
            <person name="Paulo J.A."/>
            <person name="Knejski P."/>
            <person name="Gygi S.P."/>
            <person name="Kossiakoff A.A."/>
            <person name="Rapoport T.A."/>
        </authorList>
    </citation>
    <scope>FUNCTION</scope>
    <scope>CATALYTIC ACTIVITY</scope>
    <scope>SUBCELLULAR LOCATION</scope>
    <scope>PATHWAY</scope>
    <scope>IDENTIFICATION IN THE PEX2-PEX10-PEX12 RETROTRANSLOCATION CHANNEL</scope>
    <scope>MUTAGENESIS OF 223-PRO-ARG-224; CYS-237 AND ASP-257</scope>
</reference>
<sequence length="271" mass="30752">MSRVAQLDSIALDKELYGQFWSEFNAAFNTSEHKEEWELALNTVVFMCATRFLPHYGSSCTYGSALSGVVFQCRKRTLYVVTVLAGYVWKKITHIIFNGPHCGNQMMWLKLYKWVNLLYHGCDVTNFLRFLAAEGPNARAFLSPLYRAFNVHSTRLIRDGSAIASEFYSNSVFAGLEYQNRQLLWNALLELFSNTLLTKRGLLTFVKKPPRSRSTTTYKTVCPRCGGFPTNPYQIACCRANYCYVCVVKALEWSMCDACGSSGRLTASPVY</sequence>
<organism>
    <name type="scientific">Saccharomyces cerevisiae (strain ATCC 204508 / S288c)</name>
    <name type="common">Baker's yeast</name>
    <dbReference type="NCBI Taxonomy" id="559292"/>
    <lineage>
        <taxon>Eukaryota</taxon>
        <taxon>Fungi</taxon>
        <taxon>Dikarya</taxon>
        <taxon>Ascomycota</taxon>
        <taxon>Saccharomycotina</taxon>
        <taxon>Saccharomycetes</taxon>
        <taxon>Saccharomycetales</taxon>
        <taxon>Saccharomycetaceae</taxon>
        <taxon>Saccharomyces</taxon>
    </lineage>
</organism>
<name>PEX2_YEAST</name>
<dbReference type="EC" id="2.3.2.36" evidence="7"/>
<dbReference type="EMBL" id="M86538">
    <property type="protein sequence ID" value="AAB36836.1"/>
    <property type="molecule type" value="Genomic_DNA"/>
</dbReference>
<dbReference type="EMBL" id="Z34098">
    <property type="protein sequence ID" value="CAA84000.1"/>
    <property type="molecule type" value="Genomic_DNA"/>
</dbReference>
<dbReference type="EMBL" id="Z49486">
    <property type="protein sequence ID" value="CAA89508.1"/>
    <property type="molecule type" value="Genomic_DNA"/>
</dbReference>
<dbReference type="EMBL" id="BK006943">
    <property type="protein sequence ID" value="DAA08600.1"/>
    <property type="molecule type" value="Genomic_DNA"/>
</dbReference>
<dbReference type="PIR" id="S27422">
    <property type="entry name" value="S27422"/>
</dbReference>
<dbReference type="RefSeq" id="NP_012325.1">
    <molecule id="P32800-1"/>
    <property type="nucleotide sequence ID" value="NM_001181643.1"/>
</dbReference>
<dbReference type="SMR" id="P32800"/>
<dbReference type="BioGRID" id="33548">
    <property type="interactions" value="135"/>
</dbReference>
<dbReference type="ComplexPortal" id="CPX-1903">
    <property type="entry name" value="PEX2-PEX10-PEX12 ubiquitin ligase complex"/>
</dbReference>
<dbReference type="DIP" id="DIP-4760N"/>
<dbReference type="FunCoup" id="P32800">
    <property type="interactions" value="163"/>
</dbReference>
<dbReference type="IntAct" id="P32800">
    <property type="interactions" value="9"/>
</dbReference>
<dbReference type="STRING" id="4932.YJL210W"/>
<dbReference type="TCDB" id="3.A.20.1.5">
    <property type="family name" value="the peroxisomal protein importer (ppi) family"/>
</dbReference>
<dbReference type="iPTMnet" id="P32800"/>
<dbReference type="PaxDb" id="4932-YJL210W"/>
<dbReference type="PeptideAtlas" id="P32800"/>
<dbReference type="EnsemblFungi" id="YJL210W_mRNA">
    <molecule id="P32800-1"/>
    <property type="protein sequence ID" value="YJL210W"/>
    <property type="gene ID" value="YJL210W"/>
</dbReference>
<dbReference type="GeneID" id="853219"/>
<dbReference type="KEGG" id="sce:YJL210W"/>
<dbReference type="AGR" id="SGD:S000003746"/>
<dbReference type="SGD" id="S000003746">
    <property type="gene designation" value="PEX2"/>
</dbReference>
<dbReference type="VEuPathDB" id="FungiDB:YJL210W"/>
<dbReference type="eggNOG" id="KOG2879">
    <property type="taxonomic scope" value="Eukaryota"/>
</dbReference>
<dbReference type="HOGENOM" id="CLU_1081737_0_0_1"/>
<dbReference type="InParanoid" id="P32800"/>
<dbReference type="OMA" id="YCYVCVL"/>
<dbReference type="OrthoDB" id="1701437at2759"/>
<dbReference type="BioCyc" id="YEAST:G3O-31638-MONOMER"/>
<dbReference type="UniPathway" id="UPA00143"/>
<dbReference type="BioGRID-ORCS" id="853219">
    <property type="hits" value="3 hits in 10 CRISPR screens"/>
</dbReference>
<dbReference type="PRO" id="PR:P32800"/>
<dbReference type="Proteomes" id="UP000002311">
    <property type="component" value="Chromosome X"/>
</dbReference>
<dbReference type="RNAct" id="P32800">
    <property type="molecule type" value="protein"/>
</dbReference>
<dbReference type="GO" id="GO:1990429">
    <property type="term" value="C:peroxisomal importomer complex"/>
    <property type="evidence" value="ECO:0000314"/>
    <property type="project" value="SGD"/>
</dbReference>
<dbReference type="GO" id="GO:0005778">
    <property type="term" value="C:peroxisomal membrane"/>
    <property type="evidence" value="ECO:0000314"/>
    <property type="project" value="UniProtKB"/>
</dbReference>
<dbReference type="GO" id="GO:1902495">
    <property type="term" value="C:transmembrane transporter complex"/>
    <property type="evidence" value="ECO:0000314"/>
    <property type="project" value="UniProt"/>
</dbReference>
<dbReference type="GO" id="GO:0000151">
    <property type="term" value="C:ubiquitin ligase complex"/>
    <property type="evidence" value="ECO:0000353"/>
    <property type="project" value="ComplexPortal"/>
</dbReference>
<dbReference type="GO" id="GO:0008320">
    <property type="term" value="F:protein transmembrane transporter activity"/>
    <property type="evidence" value="ECO:0000314"/>
    <property type="project" value="UniProtKB"/>
</dbReference>
<dbReference type="GO" id="GO:0061630">
    <property type="term" value="F:ubiquitin protein ligase activity"/>
    <property type="evidence" value="ECO:0000314"/>
    <property type="project" value="UniProtKB"/>
</dbReference>
<dbReference type="GO" id="GO:0008270">
    <property type="term" value="F:zinc ion binding"/>
    <property type="evidence" value="ECO:0007669"/>
    <property type="project" value="UniProtKB-KW"/>
</dbReference>
<dbReference type="GO" id="GO:0016558">
    <property type="term" value="P:protein import into peroxisome matrix"/>
    <property type="evidence" value="ECO:0000315"/>
    <property type="project" value="SGD"/>
</dbReference>
<dbReference type="GO" id="GO:0016562">
    <property type="term" value="P:protein import into peroxisome matrix, receptor recycling"/>
    <property type="evidence" value="ECO:0000314"/>
    <property type="project" value="UniProtKB"/>
</dbReference>
<dbReference type="GO" id="GO:0044721">
    <property type="term" value="P:protein import into peroxisome matrix, substrate release"/>
    <property type="evidence" value="ECO:0000314"/>
    <property type="project" value="UniProtKB"/>
</dbReference>
<dbReference type="GO" id="GO:0006513">
    <property type="term" value="P:protein monoubiquitination"/>
    <property type="evidence" value="ECO:0000314"/>
    <property type="project" value="UniProtKB"/>
</dbReference>
<dbReference type="GO" id="GO:0000209">
    <property type="term" value="P:protein polyubiquitination"/>
    <property type="evidence" value="ECO:0000314"/>
    <property type="project" value="FlyBase"/>
</dbReference>
<dbReference type="GO" id="GO:0016567">
    <property type="term" value="P:protein ubiquitination"/>
    <property type="evidence" value="ECO:0000314"/>
    <property type="project" value="ComplexPortal"/>
</dbReference>
<dbReference type="InterPro" id="IPR025654">
    <property type="entry name" value="PEX2/10"/>
</dbReference>
<dbReference type="InterPro" id="IPR006845">
    <property type="entry name" value="Pex_N"/>
</dbReference>
<dbReference type="PANTHER" id="PTHR48178">
    <property type="entry name" value="PEROXISOME BIOGENESIS FACTOR 2"/>
    <property type="match status" value="1"/>
</dbReference>
<dbReference type="PANTHER" id="PTHR48178:SF1">
    <property type="entry name" value="PEROXISOME BIOGENESIS FACTOR 2"/>
    <property type="match status" value="1"/>
</dbReference>
<dbReference type="Pfam" id="PF04757">
    <property type="entry name" value="Pex2_Pex12"/>
    <property type="match status" value="1"/>
</dbReference>
<comment type="function">
    <text evidence="5 6 7">E3 ubiquitin-protein ligase component of a retrotranslocation channel required for peroxisome organization by mediating export of the PEX5 receptor from peroxisomes to the cytosol, thereby promoting PEX5 recycling (PubMed:19687296, PubMed:22471590, PubMed:35768507). The retrotranslocation channel is composed of PEX2, PEX10 and PEX12; each subunit contributing transmembrane segments that coassemble into an open channel that specifically allows the passage of PEX5 through the peroxisomal membrane (PubMed:35768507). PEX2 also regulates peroxisome organization by acting as a E3 ubiquitin-protein ligase (PubMed:35768507). PEX2 ubiquitinates PEX5 during its passage through the retrotranslocation channel: catalyzes monoubiquitination of PEX5 at 'Cys-6', a modification that acts as a signal for PEX5 extraction into the cytosol (PubMed:35768507).</text>
</comment>
<comment type="catalytic activity">
    <reaction evidence="7">
        <text>[E2 ubiquitin-conjugating enzyme]-S-ubiquitinyl-L-cysteine + [acceptor protein]-L-cysteine = [E2 ubiquitin-conjugating enzyme]-L-cysteine + [acceptor protein]-S-ubiquitinyl-L-cysteine.</text>
        <dbReference type="EC" id="2.3.2.36"/>
    </reaction>
</comment>
<comment type="pathway">
    <text evidence="5 6 7">Protein modification; protein ubiquitination.</text>
</comment>
<comment type="subunit">
    <text evidence="6 7">Component of the PEX2-PEX10-PEX12 retrotranslocation channel, composed of PEX2, PEX10 and PEX12.</text>
</comment>
<comment type="interaction">
    <interactant intactId="EBI-13160">
        <id>P32800</id>
    </interactant>
    <interactant intactId="EBI-13194">
        <id>Q05568</id>
        <label>PEX10</label>
    </interactant>
    <organismsDiffer>false</organismsDiffer>
    <experiments>15</experiments>
</comment>
<comment type="interaction">
    <interactant intactId="EBI-13160">
        <id>P32800</id>
    </interactant>
    <interactant intactId="EBI-13206">
        <id>P80667</id>
        <label>PEX13</label>
    </interactant>
    <organismsDiffer>false</organismsDiffer>
    <experiments>10</experiments>
</comment>
<comment type="interaction">
    <interactant intactId="EBI-13160">
        <id>P32800</id>
    </interactant>
    <interactant intactId="EBI-13212">
        <id>P53112</id>
        <label>PEX14</label>
    </interactant>
    <organismsDiffer>false</organismsDiffer>
    <experiments>11</experiments>
</comment>
<comment type="subcellular location">
    <subcellularLocation>
        <location evidence="3 7">Peroxisome membrane</location>
        <topology evidence="2">Multi-pass membrane protein</topology>
    </subcellularLocation>
</comment>
<comment type="alternative products">
    <event type="alternative initiation"/>
    <isoform>
        <id>P32800-1</id>
        <name>Long</name>
        <sequence type="displayed"/>
    </isoform>
    <isoform>
        <id>P32800-2</id>
        <name>Short</name>
        <sequence type="described" ref="VSP_018874"/>
    </isoform>
</comment>
<comment type="domain">
    <text evidence="1">The three subunits of the retrotranslocation channel (PEX2, PEX10 and PEX12) coassemble in the membrane into a channel with an open 10 Angstrom pore (By similarity). The RING-type zinc-fingers that catalyze PEX5 receptor ubiquitination are positioned above the pore on the cytosolic side of the complex (By similarity).</text>
</comment>
<comment type="miscellaneous">
    <text evidence="4">Present with 339 molecules/cell in log phase SD medium.</text>
</comment>
<comment type="similarity">
    <text evidence="11">Belongs to the pex2/pex10/pex12 family.</text>
</comment>
<evidence type="ECO:0000250" key="1">
    <source>
        <dbReference type="UniProtKB" id="G2Q1C9"/>
    </source>
</evidence>
<evidence type="ECO:0000255" key="2"/>
<evidence type="ECO:0000269" key="3">
    <source>
    </source>
</evidence>
<evidence type="ECO:0000269" key="4">
    <source>
    </source>
</evidence>
<evidence type="ECO:0000269" key="5">
    <source>
    </source>
</evidence>
<evidence type="ECO:0000269" key="6">
    <source>
    </source>
</evidence>
<evidence type="ECO:0000269" key="7">
    <source>
    </source>
</evidence>
<evidence type="ECO:0000303" key="8">
    <source>
    </source>
</evidence>
<evidence type="ECO:0000303" key="9">
    <source>
    </source>
</evidence>
<evidence type="ECO:0000303" key="10">
    <source>
    </source>
</evidence>
<evidence type="ECO:0000305" key="11"/>
<evidence type="ECO:0000305" key="12">
    <source>
    </source>
</evidence>
<evidence type="ECO:0000312" key="13">
    <source>
        <dbReference type="SGD" id="S000003746"/>
    </source>
</evidence>
<accession>P32800</accession>
<accession>D6VVY4</accession>